<dbReference type="EC" id="3.5.1.5" evidence="1"/>
<dbReference type="EMBL" id="AM040264">
    <property type="protein sequence ID" value="CAJ11334.1"/>
    <property type="molecule type" value="Genomic_DNA"/>
</dbReference>
<dbReference type="RefSeq" id="WP_002966881.1">
    <property type="nucleotide sequence ID" value="NZ_KN046823.1"/>
</dbReference>
<dbReference type="SMR" id="Q2YQD8"/>
<dbReference type="STRING" id="359391.BAB1_1378"/>
<dbReference type="MEROPS" id="M38.982"/>
<dbReference type="KEGG" id="bmf:BAB1_1378"/>
<dbReference type="PATRIC" id="fig|359391.11.peg.828"/>
<dbReference type="HOGENOM" id="CLU_000980_0_0_5"/>
<dbReference type="PhylomeDB" id="Q2YQD8"/>
<dbReference type="UniPathway" id="UPA00258">
    <property type="reaction ID" value="UER00370"/>
</dbReference>
<dbReference type="Proteomes" id="UP000002719">
    <property type="component" value="Chromosome I"/>
</dbReference>
<dbReference type="GO" id="GO:0005737">
    <property type="term" value="C:cytoplasm"/>
    <property type="evidence" value="ECO:0007669"/>
    <property type="project" value="UniProtKB-SubCell"/>
</dbReference>
<dbReference type="GO" id="GO:0016151">
    <property type="term" value="F:nickel cation binding"/>
    <property type="evidence" value="ECO:0007669"/>
    <property type="project" value="UniProtKB-UniRule"/>
</dbReference>
<dbReference type="GO" id="GO:0009039">
    <property type="term" value="F:urease activity"/>
    <property type="evidence" value="ECO:0007669"/>
    <property type="project" value="UniProtKB-UniRule"/>
</dbReference>
<dbReference type="GO" id="GO:0043419">
    <property type="term" value="P:urea catabolic process"/>
    <property type="evidence" value="ECO:0007669"/>
    <property type="project" value="UniProtKB-UniRule"/>
</dbReference>
<dbReference type="CDD" id="cd00375">
    <property type="entry name" value="Urease_alpha"/>
    <property type="match status" value="1"/>
</dbReference>
<dbReference type="Gene3D" id="3.20.20.140">
    <property type="entry name" value="Metal-dependent hydrolases"/>
    <property type="match status" value="1"/>
</dbReference>
<dbReference type="Gene3D" id="2.30.40.10">
    <property type="entry name" value="Urease, subunit C, domain 1"/>
    <property type="match status" value="1"/>
</dbReference>
<dbReference type="HAMAP" id="MF_01953">
    <property type="entry name" value="Urease_alpha"/>
    <property type="match status" value="1"/>
</dbReference>
<dbReference type="InterPro" id="IPR006680">
    <property type="entry name" value="Amidohydro-rel"/>
</dbReference>
<dbReference type="InterPro" id="IPR011059">
    <property type="entry name" value="Metal-dep_hydrolase_composite"/>
</dbReference>
<dbReference type="InterPro" id="IPR032466">
    <property type="entry name" value="Metal_Hydrolase"/>
</dbReference>
<dbReference type="InterPro" id="IPR001763">
    <property type="entry name" value="Rhodanese-like_dom"/>
</dbReference>
<dbReference type="InterPro" id="IPR011612">
    <property type="entry name" value="Urease_alpha_N_dom"/>
</dbReference>
<dbReference type="InterPro" id="IPR050112">
    <property type="entry name" value="Urease_alpha_subunit"/>
</dbReference>
<dbReference type="InterPro" id="IPR017950">
    <property type="entry name" value="Urease_AS"/>
</dbReference>
<dbReference type="InterPro" id="IPR005848">
    <property type="entry name" value="Urease_asu"/>
</dbReference>
<dbReference type="InterPro" id="IPR017951">
    <property type="entry name" value="Urease_asu_c"/>
</dbReference>
<dbReference type="InterPro" id="IPR029754">
    <property type="entry name" value="Urease_Ni-bd"/>
</dbReference>
<dbReference type="NCBIfam" id="NF009686">
    <property type="entry name" value="PRK13207.1"/>
    <property type="match status" value="1"/>
</dbReference>
<dbReference type="NCBIfam" id="NF009834">
    <property type="entry name" value="PRK13309.1"/>
    <property type="match status" value="1"/>
</dbReference>
<dbReference type="NCBIfam" id="TIGR01792">
    <property type="entry name" value="urease_alph"/>
    <property type="match status" value="1"/>
</dbReference>
<dbReference type="PANTHER" id="PTHR43440">
    <property type="entry name" value="UREASE"/>
    <property type="match status" value="1"/>
</dbReference>
<dbReference type="PANTHER" id="PTHR43440:SF1">
    <property type="entry name" value="UREASE"/>
    <property type="match status" value="1"/>
</dbReference>
<dbReference type="Pfam" id="PF01979">
    <property type="entry name" value="Amidohydro_1"/>
    <property type="match status" value="1"/>
</dbReference>
<dbReference type="Pfam" id="PF00449">
    <property type="entry name" value="Urease_alpha"/>
    <property type="match status" value="1"/>
</dbReference>
<dbReference type="PRINTS" id="PR01752">
    <property type="entry name" value="UREASE"/>
</dbReference>
<dbReference type="SUPFAM" id="SSF51338">
    <property type="entry name" value="Composite domain of metallo-dependent hydrolases"/>
    <property type="match status" value="2"/>
</dbReference>
<dbReference type="SUPFAM" id="SSF51556">
    <property type="entry name" value="Metallo-dependent hydrolases"/>
    <property type="match status" value="1"/>
</dbReference>
<dbReference type="PROSITE" id="PS01120">
    <property type="entry name" value="UREASE_1"/>
    <property type="match status" value="1"/>
</dbReference>
<dbReference type="PROSITE" id="PS00145">
    <property type="entry name" value="UREASE_2"/>
    <property type="match status" value="1"/>
</dbReference>
<dbReference type="PROSITE" id="PS51368">
    <property type="entry name" value="UREASE_3"/>
    <property type="match status" value="1"/>
</dbReference>
<name>URE12_BRUA2</name>
<keyword id="KW-0963">Cytoplasm</keyword>
<keyword id="KW-0378">Hydrolase</keyword>
<keyword id="KW-0479">Metal-binding</keyword>
<keyword id="KW-0533">Nickel</keyword>
<keyword id="KW-1185">Reference proteome</keyword>
<sequence>MTQISRQQYADLYGPTIGDKIRLGDSDLYVEIEKDLRATYGDELQYGGGKTLRDGMGSENFLTQEAGCLDLVITNVTVIDAIQGVVKADVGIRNGRIVGLGKAGNPSTKDGVTRGLVTGASTDAISGEHLILTAGGMDTHVHYIAPQQVEAALSNGITTLWGGGIGPVDGTNGVTTTNGPWNLEMMLRSIEGLPINFGIQGKGNSTGIAPLIEQLEAGAAGFKVHEDYGATPATIRACLSVADEYDVSVAVHTDTLNESGYVEDTIAAFDGRSVHTYHSEGAGGGHAPDLLKVVGQNNILPSSTNPTLPCGKNSVAELFDMIMVCHNLNPKIPSDVAFAESRVRAETIVAESVLHDMGAISMIGSDSQAMGRLGETFLRAIQTADAMKKARGPLPEDAPGNDNFRVLRYIAKVTINPALTAGVGDVIGSIESGKFADLVLWEPAFFGVKPKLVLKGGLVAWANMGDPNASLPTPQPMYYRPMFAAYGSALQKTSITFVSRAAYDKGVADRFGLQRLVMPVSGTRVIGKAHMVRNSYLPNIEVDPQTFAVKVDGVHATVKPPQSISLNQLYFFS</sequence>
<proteinExistence type="inferred from homology"/>
<gene>
    <name evidence="1" type="primary">ureC2</name>
    <name type="ordered locus">BAB1_1378</name>
</gene>
<organism>
    <name type="scientific">Brucella abortus (strain 2308)</name>
    <dbReference type="NCBI Taxonomy" id="359391"/>
    <lineage>
        <taxon>Bacteria</taxon>
        <taxon>Pseudomonadati</taxon>
        <taxon>Pseudomonadota</taxon>
        <taxon>Alphaproteobacteria</taxon>
        <taxon>Hyphomicrobiales</taxon>
        <taxon>Brucellaceae</taxon>
        <taxon>Brucella/Ochrobactrum group</taxon>
        <taxon>Brucella</taxon>
    </lineage>
</organism>
<accession>Q2YQD8</accession>
<evidence type="ECO:0000255" key="1">
    <source>
        <dbReference type="HAMAP-Rule" id="MF_01953"/>
    </source>
</evidence>
<feature type="chain" id="PRO_0000234142" description="Urease subunit alpha 2">
    <location>
        <begin position="1"/>
        <end position="573"/>
    </location>
</feature>
<feature type="domain" description="Urease" evidence="1">
    <location>
        <begin position="135"/>
        <end position="573"/>
    </location>
</feature>
<feature type="active site" description="Proton donor" evidence="1">
    <location>
        <position position="326"/>
    </location>
</feature>
<feature type="binding site" evidence="1">
    <location>
        <position position="140"/>
    </location>
    <ligand>
        <name>Ni(2+)</name>
        <dbReference type="ChEBI" id="CHEBI:49786"/>
        <label>1</label>
    </ligand>
</feature>
<feature type="binding site" evidence="1">
    <location>
        <position position="142"/>
    </location>
    <ligand>
        <name>Ni(2+)</name>
        <dbReference type="ChEBI" id="CHEBI:49786"/>
        <label>1</label>
    </ligand>
</feature>
<feature type="binding site" description="via carbamate group" evidence="1">
    <location>
        <position position="223"/>
    </location>
    <ligand>
        <name>Ni(2+)</name>
        <dbReference type="ChEBI" id="CHEBI:49786"/>
        <label>1</label>
    </ligand>
</feature>
<feature type="binding site" description="via carbamate group" evidence="1">
    <location>
        <position position="223"/>
    </location>
    <ligand>
        <name>Ni(2+)</name>
        <dbReference type="ChEBI" id="CHEBI:49786"/>
        <label>2</label>
    </ligand>
</feature>
<feature type="binding site" evidence="1">
    <location>
        <position position="225"/>
    </location>
    <ligand>
        <name>substrate</name>
    </ligand>
</feature>
<feature type="binding site" evidence="1">
    <location>
        <position position="252"/>
    </location>
    <ligand>
        <name>Ni(2+)</name>
        <dbReference type="ChEBI" id="CHEBI:49786"/>
        <label>2</label>
    </ligand>
</feature>
<feature type="binding site" evidence="1">
    <location>
        <position position="278"/>
    </location>
    <ligand>
        <name>Ni(2+)</name>
        <dbReference type="ChEBI" id="CHEBI:49786"/>
        <label>2</label>
    </ligand>
</feature>
<feature type="binding site" evidence="1">
    <location>
        <position position="366"/>
    </location>
    <ligand>
        <name>Ni(2+)</name>
        <dbReference type="ChEBI" id="CHEBI:49786"/>
        <label>1</label>
    </ligand>
</feature>
<feature type="modified residue" description="N6-carboxylysine" evidence="1">
    <location>
        <position position="223"/>
    </location>
</feature>
<comment type="function">
    <text>Disrupting the ure2 operon has no effect on urease activity or pathogen survival in BALB/c mice when administered orally.</text>
</comment>
<comment type="catalytic activity">
    <reaction evidence="1">
        <text>urea + 2 H2O + H(+) = hydrogencarbonate + 2 NH4(+)</text>
        <dbReference type="Rhea" id="RHEA:20557"/>
        <dbReference type="ChEBI" id="CHEBI:15377"/>
        <dbReference type="ChEBI" id="CHEBI:15378"/>
        <dbReference type="ChEBI" id="CHEBI:16199"/>
        <dbReference type="ChEBI" id="CHEBI:17544"/>
        <dbReference type="ChEBI" id="CHEBI:28938"/>
        <dbReference type="EC" id="3.5.1.5"/>
    </reaction>
</comment>
<comment type="cofactor">
    <cofactor evidence="1">
        <name>Ni cation</name>
        <dbReference type="ChEBI" id="CHEBI:25516"/>
    </cofactor>
    <text evidence="1">Binds 2 nickel ions per subunit.</text>
</comment>
<comment type="pathway">
    <text evidence="1">Nitrogen metabolism; urea degradation; CO(2) and NH(3) from urea (urease route): step 1/1.</text>
</comment>
<comment type="subunit">
    <text evidence="1">Heterotrimer of UreA (gamma), UreB (beta) and UreC (alpha) subunits. Three heterotrimers associate to form the active enzyme.</text>
</comment>
<comment type="subcellular location">
    <subcellularLocation>
        <location evidence="1">Cytoplasm</location>
    </subcellularLocation>
</comment>
<comment type="PTM">
    <text evidence="1">Carboxylation allows a single lysine to coordinate two nickel ions.</text>
</comment>
<comment type="similarity">
    <text evidence="1">Belongs to the metallo-dependent hydrolases superfamily. Urease alpha subunit family.</text>
</comment>
<protein>
    <recommendedName>
        <fullName evidence="1">Urease subunit alpha 2</fullName>
        <ecNumber evidence="1">3.5.1.5</ecNumber>
    </recommendedName>
    <alternativeName>
        <fullName evidence="1">Urea amidohydrolase subunit alpha 2</fullName>
    </alternativeName>
</protein>
<reference key="1">
    <citation type="journal article" date="2005" name="Infect. Immun.">
        <title>Whole-genome analyses of speciation events in pathogenic Brucellae.</title>
        <authorList>
            <person name="Chain P.S."/>
            <person name="Comerci D.J."/>
            <person name="Tolmasky M.E."/>
            <person name="Larimer F.W."/>
            <person name="Malfatti S.A."/>
            <person name="Vergez L.M."/>
            <person name="Aguero F."/>
            <person name="Land M.L."/>
            <person name="Ugalde R.A."/>
            <person name="Garcia E."/>
        </authorList>
    </citation>
    <scope>NUCLEOTIDE SEQUENCE [LARGE SCALE GENOMIC DNA]</scope>
    <source>
        <strain>2308</strain>
    </source>
</reference>
<reference key="2">
    <citation type="journal article" date="2007" name="Infect. Immun.">
        <title>Characterization of the urease operon of Brucella abortus and assessment of its role in virulence of the bacterium.</title>
        <authorList>
            <person name="Sangari F.J."/>
            <person name="Seoane A."/>
            <person name="Rodriguez M.C."/>
            <person name="Aguero J."/>
            <person name="Garcia Lobo J.M."/>
        </authorList>
    </citation>
    <scope>LACK OF ROLE IN VIRULENCE</scope>
</reference>